<sequence>MRELTKRQSEIYNYIKQVVQTKGYPPSVREIGEAVGLASSSTVHGHLSRLEEKGYIRRDPTKPRAIEIVSDQTNDNINMEETIHVPVIGKVTAGVPITAVENIEEYFPLPEHLTSTHNSDIFILNVVGDSMIEAGILDGDKVIVRSQTIAENGDIIVAMTEEDEATVKRFYKEKNRYRLQPENSTMEPIYLDNVAVIGKVIGLYREM</sequence>
<reference key="1">
    <citation type="journal article" date="2004" name="Proc. Natl. Acad. Sci. U.S.A.">
        <title>Complete genomes of two clinical Staphylococcus aureus strains: evidence for the rapid evolution of virulence and drug resistance.</title>
        <authorList>
            <person name="Holden M.T.G."/>
            <person name="Feil E.J."/>
            <person name="Lindsay J.A."/>
            <person name="Peacock S.J."/>
            <person name="Day N.P.J."/>
            <person name="Enright M.C."/>
            <person name="Foster T.J."/>
            <person name="Moore C.E."/>
            <person name="Hurst L."/>
            <person name="Atkin R."/>
            <person name="Barron A."/>
            <person name="Bason N."/>
            <person name="Bentley S.D."/>
            <person name="Chillingworth C."/>
            <person name="Chillingworth T."/>
            <person name="Churcher C."/>
            <person name="Clark L."/>
            <person name="Corton C."/>
            <person name="Cronin A."/>
            <person name="Doggett J."/>
            <person name="Dowd L."/>
            <person name="Feltwell T."/>
            <person name="Hance Z."/>
            <person name="Harris B."/>
            <person name="Hauser H."/>
            <person name="Holroyd S."/>
            <person name="Jagels K."/>
            <person name="James K.D."/>
            <person name="Lennard N."/>
            <person name="Line A."/>
            <person name="Mayes R."/>
            <person name="Moule S."/>
            <person name="Mungall K."/>
            <person name="Ormond D."/>
            <person name="Quail M.A."/>
            <person name="Rabbinowitsch E."/>
            <person name="Rutherford K.M."/>
            <person name="Sanders M."/>
            <person name="Sharp S."/>
            <person name="Simmonds M."/>
            <person name="Stevens K."/>
            <person name="Whitehead S."/>
            <person name="Barrell B.G."/>
            <person name="Spratt B.G."/>
            <person name="Parkhill J."/>
        </authorList>
    </citation>
    <scope>NUCLEOTIDE SEQUENCE [LARGE SCALE GENOMIC DNA]</scope>
    <source>
        <strain>MSSA476</strain>
    </source>
</reference>
<keyword id="KW-0068">Autocatalytic cleavage</keyword>
<keyword id="KW-0227">DNA damage</keyword>
<keyword id="KW-0234">DNA repair</keyword>
<keyword id="KW-0235">DNA replication</keyword>
<keyword id="KW-0238">DNA-binding</keyword>
<keyword id="KW-0378">Hydrolase</keyword>
<keyword id="KW-0678">Repressor</keyword>
<keyword id="KW-0742">SOS response</keyword>
<keyword id="KW-0804">Transcription</keyword>
<keyword id="KW-0805">Transcription regulation</keyword>
<name>LEXA_STAAS</name>
<comment type="function">
    <text evidence="1">Represses a number of genes involved in the response to DNA damage (SOS response), including recA and lexA. In the presence of single-stranded DNA, RecA interacts with LexA causing an autocatalytic cleavage which disrupts the DNA-binding part of LexA, leading to derepression of the SOS regulon and eventually DNA repair.</text>
</comment>
<comment type="catalytic activity">
    <reaction evidence="1">
        <text>Hydrolysis of Ala-|-Gly bond in repressor LexA.</text>
        <dbReference type="EC" id="3.4.21.88"/>
    </reaction>
</comment>
<comment type="subunit">
    <text evidence="1">Homodimer.</text>
</comment>
<comment type="similarity">
    <text evidence="1">Belongs to the peptidase S24 family.</text>
</comment>
<gene>
    <name evidence="1" type="primary">lexA</name>
    <name type="ordered locus">SAS1279</name>
</gene>
<protein>
    <recommendedName>
        <fullName evidence="1">LexA repressor</fullName>
        <ecNumber evidence="1">3.4.21.88</ecNumber>
    </recommendedName>
</protein>
<evidence type="ECO:0000255" key="1">
    <source>
        <dbReference type="HAMAP-Rule" id="MF_00015"/>
    </source>
</evidence>
<proteinExistence type="inferred from homology"/>
<dbReference type="EC" id="3.4.21.88" evidence="1"/>
<dbReference type="EMBL" id="BX571857">
    <property type="protein sequence ID" value="CAG43057.1"/>
    <property type="molecule type" value="Genomic_DNA"/>
</dbReference>
<dbReference type="RefSeq" id="WP_001208760.1">
    <property type="nucleotide sequence ID" value="NC_002953.3"/>
</dbReference>
<dbReference type="SMR" id="Q6G9L9"/>
<dbReference type="MEROPS" id="S24.001"/>
<dbReference type="KEGG" id="sas:SAS1279"/>
<dbReference type="HOGENOM" id="CLU_066192_45_1_9"/>
<dbReference type="GO" id="GO:0003677">
    <property type="term" value="F:DNA binding"/>
    <property type="evidence" value="ECO:0007669"/>
    <property type="project" value="UniProtKB-UniRule"/>
</dbReference>
<dbReference type="GO" id="GO:0004252">
    <property type="term" value="F:serine-type endopeptidase activity"/>
    <property type="evidence" value="ECO:0007669"/>
    <property type="project" value="UniProtKB-UniRule"/>
</dbReference>
<dbReference type="GO" id="GO:0006281">
    <property type="term" value="P:DNA repair"/>
    <property type="evidence" value="ECO:0007669"/>
    <property type="project" value="UniProtKB-UniRule"/>
</dbReference>
<dbReference type="GO" id="GO:0006260">
    <property type="term" value="P:DNA replication"/>
    <property type="evidence" value="ECO:0007669"/>
    <property type="project" value="UniProtKB-UniRule"/>
</dbReference>
<dbReference type="GO" id="GO:0045892">
    <property type="term" value="P:negative regulation of DNA-templated transcription"/>
    <property type="evidence" value="ECO:0007669"/>
    <property type="project" value="UniProtKB-UniRule"/>
</dbReference>
<dbReference type="GO" id="GO:0006508">
    <property type="term" value="P:proteolysis"/>
    <property type="evidence" value="ECO:0007669"/>
    <property type="project" value="InterPro"/>
</dbReference>
<dbReference type="GO" id="GO:0009432">
    <property type="term" value="P:SOS response"/>
    <property type="evidence" value="ECO:0007669"/>
    <property type="project" value="UniProtKB-UniRule"/>
</dbReference>
<dbReference type="CDD" id="cd00090">
    <property type="entry name" value="HTH_ARSR"/>
    <property type="match status" value="1"/>
</dbReference>
<dbReference type="CDD" id="cd06529">
    <property type="entry name" value="S24_LexA-like"/>
    <property type="match status" value="1"/>
</dbReference>
<dbReference type="FunFam" id="1.10.10.10:FF:000009">
    <property type="entry name" value="LexA repressor"/>
    <property type="match status" value="1"/>
</dbReference>
<dbReference type="FunFam" id="2.10.109.10:FF:000001">
    <property type="entry name" value="LexA repressor"/>
    <property type="match status" value="1"/>
</dbReference>
<dbReference type="Gene3D" id="2.10.109.10">
    <property type="entry name" value="Umud Fragment, subunit A"/>
    <property type="match status" value="1"/>
</dbReference>
<dbReference type="Gene3D" id="1.10.10.10">
    <property type="entry name" value="Winged helix-like DNA-binding domain superfamily/Winged helix DNA-binding domain"/>
    <property type="match status" value="1"/>
</dbReference>
<dbReference type="HAMAP" id="MF_00015">
    <property type="entry name" value="LexA"/>
    <property type="match status" value="1"/>
</dbReference>
<dbReference type="InterPro" id="IPR011991">
    <property type="entry name" value="ArsR-like_HTH"/>
</dbReference>
<dbReference type="InterPro" id="IPR006200">
    <property type="entry name" value="LexA"/>
</dbReference>
<dbReference type="InterPro" id="IPR039418">
    <property type="entry name" value="LexA-like"/>
</dbReference>
<dbReference type="InterPro" id="IPR036286">
    <property type="entry name" value="LexA/Signal_pep-like_sf"/>
</dbReference>
<dbReference type="InterPro" id="IPR006199">
    <property type="entry name" value="LexA_DNA-bd_dom"/>
</dbReference>
<dbReference type="InterPro" id="IPR050077">
    <property type="entry name" value="LexA_repressor"/>
</dbReference>
<dbReference type="InterPro" id="IPR006197">
    <property type="entry name" value="Peptidase_S24_LexA"/>
</dbReference>
<dbReference type="InterPro" id="IPR015927">
    <property type="entry name" value="Peptidase_S24_S26A/B/C"/>
</dbReference>
<dbReference type="InterPro" id="IPR036388">
    <property type="entry name" value="WH-like_DNA-bd_sf"/>
</dbReference>
<dbReference type="InterPro" id="IPR036390">
    <property type="entry name" value="WH_DNA-bd_sf"/>
</dbReference>
<dbReference type="NCBIfam" id="TIGR00498">
    <property type="entry name" value="lexA"/>
    <property type="match status" value="1"/>
</dbReference>
<dbReference type="PANTHER" id="PTHR33516">
    <property type="entry name" value="LEXA REPRESSOR"/>
    <property type="match status" value="1"/>
</dbReference>
<dbReference type="PANTHER" id="PTHR33516:SF2">
    <property type="entry name" value="LEXA REPRESSOR-RELATED"/>
    <property type="match status" value="1"/>
</dbReference>
<dbReference type="Pfam" id="PF01726">
    <property type="entry name" value="LexA_DNA_bind"/>
    <property type="match status" value="1"/>
</dbReference>
<dbReference type="Pfam" id="PF00717">
    <property type="entry name" value="Peptidase_S24"/>
    <property type="match status" value="1"/>
</dbReference>
<dbReference type="PRINTS" id="PR00726">
    <property type="entry name" value="LEXASERPTASE"/>
</dbReference>
<dbReference type="SUPFAM" id="SSF51306">
    <property type="entry name" value="LexA/Signal peptidase"/>
    <property type="match status" value="1"/>
</dbReference>
<dbReference type="SUPFAM" id="SSF46785">
    <property type="entry name" value="Winged helix' DNA-binding domain"/>
    <property type="match status" value="1"/>
</dbReference>
<accession>Q6G9L9</accession>
<feature type="chain" id="PRO_0000170091" description="LexA repressor">
    <location>
        <begin position="1"/>
        <end position="207"/>
    </location>
</feature>
<feature type="DNA-binding region" description="H-T-H motif" evidence="1">
    <location>
        <begin position="28"/>
        <end position="48"/>
    </location>
</feature>
<feature type="active site" description="For autocatalytic cleavage activity" evidence="1">
    <location>
        <position position="130"/>
    </location>
</feature>
<feature type="active site" description="For autocatalytic cleavage activity" evidence="1">
    <location>
        <position position="168"/>
    </location>
</feature>
<feature type="site" description="Cleavage; by autolysis" evidence="1">
    <location>
        <begin position="93"/>
        <end position="94"/>
    </location>
</feature>
<organism>
    <name type="scientific">Staphylococcus aureus (strain MSSA476)</name>
    <dbReference type="NCBI Taxonomy" id="282459"/>
    <lineage>
        <taxon>Bacteria</taxon>
        <taxon>Bacillati</taxon>
        <taxon>Bacillota</taxon>
        <taxon>Bacilli</taxon>
        <taxon>Bacillales</taxon>
        <taxon>Staphylococcaceae</taxon>
        <taxon>Staphylococcus</taxon>
    </lineage>
</organism>